<reference key="1">
    <citation type="journal article" date="2007" name="PLoS Genet.">
        <title>A tale of two oxidation states: bacterial colonization of arsenic-rich environments.</title>
        <authorList>
            <person name="Muller D."/>
            <person name="Medigue C."/>
            <person name="Koechler S."/>
            <person name="Barbe V."/>
            <person name="Barakat M."/>
            <person name="Talla E."/>
            <person name="Bonnefoy V."/>
            <person name="Krin E."/>
            <person name="Arsene-Ploetze F."/>
            <person name="Carapito C."/>
            <person name="Chandler M."/>
            <person name="Cournoyer B."/>
            <person name="Cruveiller S."/>
            <person name="Dossat C."/>
            <person name="Duval S."/>
            <person name="Heymann M."/>
            <person name="Leize E."/>
            <person name="Lieutaud A."/>
            <person name="Lievremont D."/>
            <person name="Makita Y."/>
            <person name="Mangenot S."/>
            <person name="Nitschke W."/>
            <person name="Ortet P."/>
            <person name="Perdrial N."/>
            <person name="Schoepp B."/>
            <person name="Siguier P."/>
            <person name="Simeonova D.D."/>
            <person name="Rouy Z."/>
            <person name="Segurens B."/>
            <person name="Turlin E."/>
            <person name="Vallenet D."/>
            <person name="van Dorsselaer A."/>
            <person name="Weiss S."/>
            <person name="Weissenbach J."/>
            <person name="Lett M.-C."/>
            <person name="Danchin A."/>
            <person name="Bertin P.N."/>
        </authorList>
    </citation>
    <scope>NUCLEOTIDE SEQUENCE [LARGE SCALE GENOMIC DNA]</scope>
    <source>
        <strain>ULPAs1</strain>
    </source>
</reference>
<accession>A4G6R2</accession>
<name>UVRC_HERAR</name>
<comment type="function">
    <text evidence="1">The UvrABC repair system catalyzes the recognition and processing of DNA lesions. UvrC both incises the 5' and 3' sides of the lesion. The N-terminal half is responsible for the 3' incision and the C-terminal half is responsible for the 5' incision.</text>
</comment>
<comment type="subunit">
    <text evidence="1">Interacts with UvrB in an incision complex.</text>
</comment>
<comment type="subcellular location">
    <subcellularLocation>
        <location evidence="1">Cytoplasm</location>
    </subcellularLocation>
</comment>
<comment type="similarity">
    <text evidence="1">Belongs to the UvrC family.</text>
</comment>
<sequence length="618" mass="69502">MSDIETPDPRAIVLDTVAKLPNLPGVYRYFDAENNLLYVGKARDLKKRVSSYFLKNLASPRTALMVEKIARLETTITRSEAEALLLENNLIKTLQPRYNILFRDDKSYPYLKITGQKFPRMAYYRGAVDKKNQYFGPFPSGWAVKESMQILQKVFLLRTCEDSVFANRTRPCLLHQIHRCSAPCVNYISQEDYALDVDNAAKFLRGRQTEVLEVLQAKMLAYAEELKFEQAALVRNQINALSRVLHQQSMDTGGDADIDIIAVIVQGGRACVNLAMVRGGRHLGDRAYFPTHVDNVLTNAEESVAAEVMKAFLAQHYIDKFIPGTLILNTEIDEPELMLALMQQCGHRINLIFQPQGPRRQWLEMAQKGAEISLARLLSEQGSQQTRTRMLVDALKIDVEDIEAFRVECFDISHTQGEATQASCVVFHHHAMQNGEYRRYNINDITPGDDYAAMRQVLMRRYEKVANGDGVMPDVVLIDGGKGQVEMARQVFVELGLDISLIVGVAKGEGRKVGLETLVFVDGRAPQELGKESGALMLIAQIRDEAHRFAITGMRAKRAKARQTSRLEEIEGIGAKRRQKLLARFGGLRGVVDASVEDLSSVEGISRQLAEDIYKQLH</sequence>
<dbReference type="EMBL" id="CU207211">
    <property type="protein sequence ID" value="CAL62199.1"/>
    <property type="molecule type" value="Genomic_DNA"/>
</dbReference>
<dbReference type="SMR" id="A4G6R2"/>
<dbReference type="STRING" id="204773.HEAR2057"/>
<dbReference type="KEGG" id="har:HEAR2057"/>
<dbReference type="eggNOG" id="COG0322">
    <property type="taxonomic scope" value="Bacteria"/>
</dbReference>
<dbReference type="HOGENOM" id="CLU_014841_3_0_4"/>
<dbReference type="OrthoDB" id="9804933at2"/>
<dbReference type="Proteomes" id="UP000006697">
    <property type="component" value="Chromosome"/>
</dbReference>
<dbReference type="GO" id="GO:0005737">
    <property type="term" value="C:cytoplasm"/>
    <property type="evidence" value="ECO:0007669"/>
    <property type="project" value="UniProtKB-SubCell"/>
</dbReference>
<dbReference type="GO" id="GO:0009380">
    <property type="term" value="C:excinuclease repair complex"/>
    <property type="evidence" value="ECO:0007669"/>
    <property type="project" value="InterPro"/>
</dbReference>
<dbReference type="GO" id="GO:0003677">
    <property type="term" value="F:DNA binding"/>
    <property type="evidence" value="ECO:0007669"/>
    <property type="project" value="UniProtKB-UniRule"/>
</dbReference>
<dbReference type="GO" id="GO:0009381">
    <property type="term" value="F:excinuclease ABC activity"/>
    <property type="evidence" value="ECO:0007669"/>
    <property type="project" value="UniProtKB-UniRule"/>
</dbReference>
<dbReference type="GO" id="GO:0006289">
    <property type="term" value="P:nucleotide-excision repair"/>
    <property type="evidence" value="ECO:0007669"/>
    <property type="project" value="UniProtKB-UniRule"/>
</dbReference>
<dbReference type="GO" id="GO:0009432">
    <property type="term" value="P:SOS response"/>
    <property type="evidence" value="ECO:0007669"/>
    <property type="project" value="UniProtKB-UniRule"/>
</dbReference>
<dbReference type="CDD" id="cd10434">
    <property type="entry name" value="GIY-YIG_UvrC_Cho"/>
    <property type="match status" value="1"/>
</dbReference>
<dbReference type="FunFam" id="3.30.420.340:FF:000001">
    <property type="entry name" value="UvrABC system protein C"/>
    <property type="match status" value="1"/>
</dbReference>
<dbReference type="FunFam" id="3.40.1440.10:FF:000001">
    <property type="entry name" value="UvrABC system protein C"/>
    <property type="match status" value="1"/>
</dbReference>
<dbReference type="Gene3D" id="1.10.150.20">
    <property type="entry name" value="5' to 3' exonuclease, C-terminal subdomain"/>
    <property type="match status" value="1"/>
</dbReference>
<dbReference type="Gene3D" id="3.40.1440.10">
    <property type="entry name" value="GIY-YIG endonuclease"/>
    <property type="match status" value="1"/>
</dbReference>
<dbReference type="Gene3D" id="4.10.860.10">
    <property type="entry name" value="UVR domain"/>
    <property type="match status" value="1"/>
</dbReference>
<dbReference type="Gene3D" id="3.30.420.340">
    <property type="entry name" value="UvrC, RNAse H endonuclease domain"/>
    <property type="match status" value="1"/>
</dbReference>
<dbReference type="HAMAP" id="MF_00203">
    <property type="entry name" value="UvrC"/>
    <property type="match status" value="1"/>
</dbReference>
<dbReference type="InterPro" id="IPR000305">
    <property type="entry name" value="GIY-YIG_endonuc"/>
</dbReference>
<dbReference type="InterPro" id="IPR035901">
    <property type="entry name" value="GIY-YIG_endonuc_sf"/>
</dbReference>
<dbReference type="InterPro" id="IPR047296">
    <property type="entry name" value="GIY-YIG_UvrC_Cho"/>
</dbReference>
<dbReference type="InterPro" id="IPR003583">
    <property type="entry name" value="Hlx-hairpin-Hlx_DNA-bd_motif"/>
</dbReference>
<dbReference type="InterPro" id="IPR010994">
    <property type="entry name" value="RuvA_2-like"/>
</dbReference>
<dbReference type="InterPro" id="IPR001943">
    <property type="entry name" value="UVR_dom"/>
</dbReference>
<dbReference type="InterPro" id="IPR036876">
    <property type="entry name" value="UVR_dom_sf"/>
</dbReference>
<dbReference type="InterPro" id="IPR050066">
    <property type="entry name" value="UvrABC_protein_C"/>
</dbReference>
<dbReference type="InterPro" id="IPR004791">
    <property type="entry name" value="UvrC"/>
</dbReference>
<dbReference type="InterPro" id="IPR001162">
    <property type="entry name" value="UvrC_RNase_H_dom"/>
</dbReference>
<dbReference type="InterPro" id="IPR038476">
    <property type="entry name" value="UvrC_RNase_H_dom_sf"/>
</dbReference>
<dbReference type="NCBIfam" id="TIGR00194">
    <property type="entry name" value="uvrC"/>
    <property type="match status" value="1"/>
</dbReference>
<dbReference type="PANTHER" id="PTHR30562:SF1">
    <property type="entry name" value="UVRABC SYSTEM PROTEIN C"/>
    <property type="match status" value="1"/>
</dbReference>
<dbReference type="PANTHER" id="PTHR30562">
    <property type="entry name" value="UVRC/OXIDOREDUCTASE"/>
    <property type="match status" value="1"/>
</dbReference>
<dbReference type="Pfam" id="PF01541">
    <property type="entry name" value="GIY-YIG"/>
    <property type="match status" value="1"/>
</dbReference>
<dbReference type="Pfam" id="PF14520">
    <property type="entry name" value="HHH_5"/>
    <property type="match status" value="1"/>
</dbReference>
<dbReference type="Pfam" id="PF02151">
    <property type="entry name" value="UVR"/>
    <property type="match status" value="1"/>
</dbReference>
<dbReference type="Pfam" id="PF22920">
    <property type="entry name" value="UvrC_RNaseH"/>
    <property type="match status" value="1"/>
</dbReference>
<dbReference type="Pfam" id="PF08459">
    <property type="entry name" value="UvrC_RNaseH_dom"/>
    <property type="match status" value="1"/>
</dbReference>
<dbReference type="SMART" id="SM00465">
    <property type="entry name" value="GIYc"/>
    <property type="match status" value="1"/>
</dbReference>
<dbReference type="SMART" id="SM00278">
    <property type="entry name" value="HhH1"/>
    <property type="match status" value="2"/>
</dbReference>
<dbReference type="SUPFAM" id="SSF46600">
    <property type="entry name" value="C-terminal UvrC-binding domain of UvrB"/>
    <property type="match status" value="1"/>
</dbReference>
<dbReference type="SUPFAM" id="SSF82771">
    <property type="entry name" value="GIY-YIG endonuclease"/>
    <property type="match status" value="1"/>
</dbReference>
<dbReference type="SUPFAM" id="SSF47781">
    <property type="entry name" value="RuvA domain 2-like"/>
    <property type="match status" value="1"/>
</dbReference>
<dbReference type="PROSITE" id="PS50164">
    <property type="entry name" value="GIY_YIG"/>
    <property type="match status" value="1"/>
</dbReference>
<dbReference type="PROSITE" id="PS50151">
    <property type="entry name" value="UVR"/>
    <property type="match status" value="1"/>
</dbReference>
<dbReference type="PROSITE" id="PS50165">
    <property type="entry name" value="UVRC"/>
    <property type="match status" value="1"/>
</dbReference>
<organism>
    <name type="scientific">Herminiimonas arsenicoxydans</name>
    <dbReference type="NCBI Taxonomy" id="204773"/>
    <lineage>
        <taxon>Bacteria</taxon>
        <taxon>Pseudomonadati</taxon>
        <taxon>Pseudomonadota</taxon>
        <taxon>Betaproteobacteria</taxon>
        <taxon>Burkholderiales</taxon>
        <taxon>Oxalobacteraceae</taxon>
        <taxon>Herminiimonas</taxon>
    </lineage>
</organism>
<protein>
    <recommendedName>
        <fullName evidence="1">UvrABC system protein C</fullName>
        <shortName evidence="1">Protein UvrC</shortName>
    </recommendedName>
    <alternativeName>
        <fullName evidence="1">Excinuclease ABC subunit C</fullName>
    </alternativeName>
</protein>
<proteinExistence type="inferred from homology"/>
<evidence type="ECO:0000255" key="1">
    <source>
        <dbReference type="HAMAP-Rule" id="MF_00203"/>
    </source>
</evidence>
<feature type="chain" id="PRO_1000099491" description="UvrABC system protein C">
    <location>
        <begin position="1"/>
        <end position="618"/>
    </location>
</feature>
<feature type="domain" description="GIY-YIG" evidence="1">
    <location>
        <begin position="22"/>
        <end position="100"/>
    </location>
</feature>
<feature type="domain" description="UVR" evidence="1">
    <location>
        <begin position="209"/>
        <end position="244"/>
    </location>
</feature>
<keyword id="KW-0963">Cytoplasm</keyword>
<keyword id="KW-0227">DNA damage</keyword>
<keyword id="KW-0228">DNA excision</keyword>
<keyword id="KW-0234">DNA repair</keyword>
<keyword id="KW-0267">Excision nuclease</keyword>
<keyword id="KW-1185">Reference proteome</keyword>
<keyword id="KW-0742">SOS response</keyword>
<gene>
    <name evidence="1" type="primary">uvrC</name>
    <name type="ordered locus">HEAR2057</name>
</gene>